<keyword id="KW-0106">Calcium</keyword>
<keyword id="KW-1015">Disulfide bond</keyword>
<keyword id="KW-0256">Endoplasmic reticulum</keyword>
<keyword id="KW-0325">Glycoprotein</keyword>
<keyword id="KW-0479">Metal-binding</keyword>
<keyword id="KW-1185">Reference proteome</keyword>
<keyword id="KW-0732">Signal</keyword>
<name>SUMF2_PONAB</name>
<protein>
    <recommendedName>
        <fullName evidence="5">Inactive C-alpha-formylglycine-generating enzyme 2</fullName>
    </recommendedName>
    <alternativeName>
        <fullName evidence="1">Sulfatase-modifying factor 2</fullName>
    </alternativeName>
</protein>
<feature type="signal peptide" evidence="2">
    <location>
        <begin position="1"/>
        <end position="25"/>
    </location>
</feature>
<feature type="chain" id="PRO_0000033461" description="Inactive C-alpha-formylglycine-generating enzyme 2">
    <location>
        <begin position="26"/>
        <end position="301"/>
    </location>
</feature>
<feature type="region of interest" description="Disordered" evidence="4">
    <location>
        <begin position="274"/>
        <end position="301"/>
    </location>
</feature>
<feature type="short sequence motif" description="Non-canonical ER retention motif" evidence="1">
    <location>
        <begin position="298"/>
        <end position="301"/>
    </location>
</feature>
<feature type="compositionally biased region" description="Polar residues" evidence="4">
    <location>
        <begin position="274"/>
        <end position="284"/>
    </location>
</feature>
<feature type="binding site" evidence="1">
    <location>
        <position position="194"/>
    </location>
    <ligand>
        <name>Ca(2+)</name>
        <dbReference type="ChEBI" id="CHEBI:29108"/>
        <label>1</label>
    </ligand>
</feature>
<feature type="binding site" evidence="1">
    <location>
        <position position="195"/>
    </location>
    <ligand>
        <name>Ca(2+)</name>
        <dbReference type="ChEBI" id="CHEBI:29108"/>
        <label>1</label>
    </ligand>
</feature>
<feature type="binding site" evidence="1">
    <location>
        <position position="208"/>
    </location>
    <ligand>
        <name>Ca(2+)</name>
        <dbReference type="ChEBI" id="CHEBI:29108"/>
        <label>1</label>
    </ligand>
</feature>
<feature type="binding site" evidence="1">
    <location>
        <position position="210"/>
    </location>
    <ligand>
        <name>Ca(2+)</name>
        <dbReference type="ChEBI" id="CHEBI:29108"/>
        <label>1</label>
    </ligand>
</feature>
<feature type="binding site" evidence="1">
    <location>
        <position position="229"/>
    </location>
    <ligand>
        <name>Ca(2+)</name>
        <dbReference type="ChEBI" id="CHEBI:29108"/>
        <label>2</label>
    </ligand>
</feature>
<feature type="binding site" evidence="1">
    <location>
        <position position="232"/>
    </location>
    <ligand>
        <name>Ca(2+)</name>
        <dbReference type="ChEBI" id="CHEBI:29108"/>
        <label>2</label>
    </ligand>
</feature>
<feature type="binding site" evidence="1">
    <location>
        <position position="234"/>
    </location>
    <ligand>
        <name>Ca(2+)</name>
        <dbReference type="ChEBI" id="CHEBI:29108"/>
        <label>2</label>
    </ligand>
</feature>
<feature type="binding site" evidence="1">
    <location>
        <position position="236"/>
    </location>
    <ligand>
        <name>Ca(2+)</name>
        <dbReference type="ChEBI" id="CHEBI:29108"/>
        <label>2</label>
    </ligand>
</feature>
<feature type="glycosylation site" description="N-linked (GlcNAc...) asparagine" evidence="3">
    <location>
        <position position="191"/>
    </location>
</feature>
<feature type="disulfide bond" evidence="1">
    <location>
        <begin position="156"/>
        <end position="290"/>
    </location>
</feature>
<proteinExistence type="evidence at transcript level"/>
<gene>
    <name evidence="1" type="primary">SUMF2</name>
</gene>
<accession>Q5RCR5</accession>
<reference key="1">
    <citation type="submission" date="2004-11" db="EMBL/GenBank/DDBJ databases">
        <authorList>
            <consortium name="The German cDNA consortium"/>
        </authorList>
    </citation>
    <scope>NUCLEOTIDE SEQUENCE [LARGE SCALE MRNA]</scope>
    <source>
        <tissue>Heart</tissue>
    </source>
</reference>
<organism>
    <name type="scientific">Pongo abelii</name>
    <name type="common">Sumatran orangutan</name>
    <name type="synonym">Pongo pygmaeus abelii</name>
    <dbReference type="NCBI Taxonomy" id="9601"/>
    <lineage>
        <taxon>Eukaryota</taxon>
        <taxon>Metazoa</taxon>
        <taxon>Chordata</taxon>
        <taxon>Craniata</taxon>
        <taxon>Vertebrata</taxon>
        <taxon>Euteleostomi</taxon>
        <taxon>Mammalia</taxon>
        <taxon>Eutheria</taxon>
        <taxon>Euarchontoglires</taxon>
        <taxon>Primates</taxon>
        <taxon>Haplorrhini</taxon>
        <taxon>Catarrhini</taxon>
        <taxon>Hominidae</taxon>
        <taxon>Pongo</taxon>
    </lineage>
</organism>
<evidence type="ECO:0000250" key="1">
    <source>
        <dbReference type="UniProtKB" id="Q8NBJ7"/>
    </source>
</evidence>
<evidence type="ECO:0000255" key="2"/>
<evidence type="ECO:0000255" key="3">
    <source>
        <dbReference type="PROSITE-ProRule" id="PRU00498"/>
    </source>
</evidence>
<evidence type="ECO:0000256" key="4">
    <source>
        <dbReference type="SAM" id="MobiDB-lite"/>
    </source>
</evidence>
<evidence type="ECO:0000305" key="5"/>
<comment type="function">
    <text evidence="1">Lacks formylglycine generating activity and is unable to convert newly synthesized inactive sulfatases to their active form. Inhibits the activation of sulfatases by SUMF1.</text>
</comment>
<comment type="subunit">
    <text evidence="1">Homodimer and heterodimer with SUMF1.</text>
</comment>
<comment type="subcellular location">
    <subcellularLocation>
        <location evidence="1">Endoplasmic reticulum lumen</location>
    </subcellularLocation>
</comment>
<comment type="domain">
    <text evidence="1">The non-canonical ER retention motif mediates retention of the protein in the endoplasmic reticulum.</text>
</comment>
<comment type="similarity">
    <text evidence="5">Belongs to the sulfatase-modifying factor family.</text>
</comment>
<comment type="caution">
    <text evidence="5">Although strongly similar to formylglycine-generating enzyme, lacks the catalytic Cys residues that bind the catalytic copper. The catalytic copper is required to activate oxygen and catalyze oxidative C-H activation.</text>
</comment>
<dbReference type="EMBL" id="CR858204">
    <property type="protein sequence ID" value="CAH90442.1"/>
    <property type="molecule type" value="mRNA"/>
</dbReference>
<dbReference type="RefSeq" id="NP_001125223.1">
    <property type="nucleotide sequence ID" value="NM_001131751.1"/>
</dbReference>
<dbReference type="SMR" id="Q5RCR5"/>
<dbReference type="FunCoup" id="Q5RCR5">
    <property type="interactions" value="587"/>
</dbReference>
<dbReference type="STRING" id="9601.ENSPPYP00000019664"/>
<dbReference type="GlyCosmos" id="Q5RCR5">
    <property type="glycosylation" value="1 site, No reported glycans"/>
</dbReference>
<dbReference type="GeneID" id="100172116"/>
<dbReference type="CTD" id="25870"/>
<dbReference type="eggNOG" id="ENOG502QRY6">
    <property type="taxonomic scope" value="Eukaryota"/>
</dbReference>
<dbReference type="InParanoid" id="Q5RCR5"/>
<dbReference type="OrthoDB" id="659at2759"/>
<dbReference type="Proteomes" id="UP000001595">
    <property type="component" value="Unplaced"/>
</dbReference>
<dbReference type="GO" id="GO:0005783">
    <property type="term" value="C:endoplasmic reticulum"/>
    <property type="evidence" value="ECO:0000250"/>
    <property type="project" value="UniProtKB"/>
</dbReference>
<dbReference type="GO" id="GO:0005788">
    <property type="term" value="C:endoplasmic reticulum lumen"/>
    <property type="evidence" value="ECO:0007669"/>
    <property type="project" value="UniProtKB-SubCell"/>
</dbReference>
<dbReference type="GO" id="GO:0046872">
    <property type="term" value="F:metal ion binding"/>
    <property type="evidence" value="ECO:0007669"/>
    <property type="project" value="UniProtKB-KW"/>
</dbReference>
<dbReference type="FunFam" id="3.90.1580.10:FF:000002">
    <property type="entry name" value="sulfatase-modifying factor 2 isoform X1"/>
    <property type="match status" value="1"/>
</dbReference>
<dbReference type="Gene3D" id="3.90.1580.10">
    <property type="entry name" value="paralog of FGE (formylglycine-generating enzyme)"/>
    <property type="match status" value="1"/>
</dbReference>
<dbReference type="InterPro" id="IPR016187">
    <property type="entry name" value="CTDL_fold"/>
</dbReference>
<dbReference type="InterPro" id="IPR051043">
    <property type="entry name" value="Sulfatase_Mod_Factor_Kinase"/>
</dbReference>
<dbReference type="InterPro" id="IPR005532">
    <property type="entry name" value="SUMF_dom"/>
</dbReference>
<dbReference type="InterPro" id="IPR042095">
    <property type="entry name" value="SUMF_sf"/>
</dbReference>
<dbReference type="PANTHER" id="PTHR23150:SF33">
    <property type="entry name" value="INACTIVE C-ALPHA-FORMYLGLYCINE-GENERATING ENZYME 2"/>
    <property type="match status" value="1"/>
</dbReference>
<dbReference type="PANTHER" id="PTHR23150">
    <property type="entry name" value="SULFATASE MODIFYING FACTOR 1, 2"/>
    <property type="match status" value="1"/>
</dbReference>
<dbReference type="Pfam" id="PF03781">
    <property type="entry name" value="FGE-sulfatase"/>
    <property type="match status" value="1"/>
</dbReference>
<dbReference type="SUPFAM" id="SSF56436">
    <property type="entry name" value="C-type lectin-like"/>
    <property type="match status" value="1"/>
</dbReference>
<sequence>MARHGLPLLPLLSLLVGAWLKLGNGQATSMVQLQGGRFLMGTNSPDSRDGEGPVREATVKPFAIDIFPVTNKDFRDFVREKKYRTEAEMFGWSFVFEDFVSDELRNKATQPMKSVLWWLPVEKAFWRQPAGPGSGIRERLEHPVLHVSWNDARAYCAWRGKRLPTEEEWEFAARGGLKGQVYPWGNWFQPNRTNLWQGKFPKGDKAEDGFHGVSPVNAFPAQNNYGLYDLLGNVWEWTASPYQAAEQDMRVLRGASWIDTADGSANHRARVTTRMGNTPDSASDNLGFRCAADAGRPPGEL</sequence>